<sequence>MNSTIEQLKHRIAVASKRKPAELVIKNAEVLNVFTGDWKKTDVAIADGYIAGLGNYEGLQTVDATGKKIVPGLINGHIHIESTMLTPREFSKVMLKHGVTTAITDPHEIANVAGTDGLEYMLNASDALPMNIFVNMPSSVPATQFEHNGAQLDAKDISSYFQNPNVLGLAEVMDFPSVANADQKMLEKIVSTIQHGGIIDGHAAGLSKEDLNIYMAAGIRNDHESVSAQEGKDRLEAGMYLMIREGTVAKDLEALLPIINDKNARRCIFVTDDMLLDDLVENGDIDHIIRKAIQLGLDPVMAYQMATLNTAECFGLRELGAVAPGYIADFLILNDENQVDIHQVYKNGKCVVDEGEINQSYFAASLTYDATTLPKPRIQQLKASDFSIDLTDDYCNIIEIVPNKIITNHVCERVEVKEGKFVPSVDKDQLLIAVVERHKGLGYIGKGIVKGFKMKEGAIATSVAHDSHNFVVVGTSEEEMLSAIKKVEQLDGGLVVTKRKQVKAHLALPIGGLMSDKDYLDAYEEVLKLNHVAVENGIPSNFNPFLTLSFLTLPVIPTLKVTDQGLFDFKTFSHINVEVEEK</sequence>
<gene>
    <name evidence="1" type="primary">ade</name>
    <name type="synonym">adeC</name>
    <name type="ordered locus">OB1030</name>
</gene>
<proteinExistence type="inferred from homology"/>
<reference key="1">
    <citation type="journal article" date="2002" name="Nucleic Acids Res.">
        <title>Genome sequence of Oceanobacillus iheyensis isolated from the Iheya Ridge and its unexpected adaptive capabilities to extreme environments.</title>
        <authorList>
            <person name="Takami H."/>
            <person name="Takaki Y."/>
            <person name="Uchiyama I."/>
        </authorList>
    </citation>
    <scope>NUCLEOTIDE SEQUENCE [LARGE SCALE GENOMIC DNA]</scope>
    <source>
        <strain>DSM 14371 / CIP 107618 / JCM 11309 / KCTC 3954 / HTE831</strain>
    </source>
</reference>
<name>ADEC_OCEIH</name>
<accession>Q8CUS7</accession>
<dbReference type="EC" id="3.5.4.2" evidence="1"/>
<dbReference type="EMBL" id="BA000028">
    <property type="protein sequence ID" value="BAC12986.1"/>
    <property type="molecule type" value="Genomic_DNA"/>
</dbReference>
<dbReference type="RefSeq" id="WP_011065432.1">
    <property type="nucleotide sequence ID" value="NC_004193.1"/>
</dbReference>
<dbReference type="SMR" id="Q8CUS7"/>
<dbReference type="STRING" id="221109.gene:10733268"/>
<dbReference type="KEGG" id="oih:OB1030"/>
<dbReference type="eggNOG" id="COG1001">
    <property type="taxonomic scope" value="Bacteria"/>
</dbReference>
<dbReference type="HOGENOM" id="CLU_027935_0_0_9"/>
<dbReference type="OrthoDB" id="9775607at2"/>
<dbReference type="PhylomeDB" id="Q8CUS7"/>
<dbReference type="Proteomes" id="UP000000822">
    <property type="component" value="Chromosome"/>
</dbReference>
<dbReference type="GO" id="GO:0000034">
    <property type="term" value="F:adenine deaminase activity"/>
    <property type="evidence" value="ECO:0007669"/>
    <property type="project" value="UniProtKB-UniRule"/>
</dbReference>
<dbReference type="GO" id="GO:0006146">
    <property type="term" value="P:adenine catabolic process"/>
    <property type="evidence" value="ECO:0007669"/>
    <property type="project" value="InterPro"/>
</dbReference>
<dbReference type="CDD" id="cd01295">
    <property type="entry name" value="AdeC"/>
    <property type="match status" value="1"/>
</dbReference>
<dbReference type="FunFam" id="3.20.20.140:FF:000016">
    <property type="entry name" value="Adenine deaminase"/>
    <property type="match status" value="1"/>
</dbReference>
<dbReference type="Gene3D" id="3.20.20.140">
    <property type="entry name" value="Metal-dependent hydrolases"/>
    <property type="match status" value="1"/>
</dbReference>
<dbReference type="Gene3D" id="2.30.40.10">
    <property type="entry name" value="Urease, subunit C, domain 1"/>
    <property type="match status" value="1"/>
</dbReference>
<dbReference type="HAMAP" id="MF_01518">
    <property type="entry name" value="Adenine_deamin"/>
    <property type="match status" value="1"/>
</dbReference>
<dbReference type="InterPro" id="IPR006679">
    <property type="entry name" value="Adenine_deam"/>
</dbReference>
<dbReference type="InterPro" id="IPR026912">
    <property type="entry name" value="Adenine_deam_C"/>
</dbReference>
<dbReference type="InterPro" id="IPR006680">
    <property type="entry name" value="Amidohydro-rel"/>
</dbReference>
<dbReference type="InterPro" id="IPR011059">
    <property type="entry name" value="Metal-dep_hydrolase_composite"/>
</dbReference>
<dbReference type="InterPro" id="IPR032466">
    <property type="entry name" value="Metal_Hydrolase"/>
</dbReference>
<dbReference type="NCBIfam" id="TIGR01178">
    <property type="entry name" value="ade"/>
    <property type="match status" value="1"/>
</dbReference>
<dbReference type="PANTHER" id="PTHR11113:SF2">
    <property type="entry name" value="ADENINE DEAMINASE"/>
    <property type="match status" value="1"/>
</dbReference>
<dbReference type="PANTHER" id="PTHR11113">
    <property type="entry name" value="N-ACETYLGLUCOSAMINE-6-PHOSPHATE DEACETYLASE"/>
    <property type="match status" value="1"/>
</dbReference>
<dbReference type="Pfam" id="PF13382">
    <property type="entry name" value="Adenine_deam_C"/>
    <property type="match status" value="1"/>
</dbReference>
<dbReference type="Pfam" id="PF01979">
    <property type="entry name" value="Amidohydro_1"/>
    <property type="match status" value="1"/>
</dbReference>
<dbReference type="SUPFAM" id="SSF51338">
    <property type="entry name" value="Composite domain of metallo-dependent hydrolases"/>
    <property type="match status" value="1"/>
</dbReference>
<dbReference type="SUPFAM" id="SSF51556">
    <property type="entry name" value="Metallo-dependent hydrolases"/>
    <property type="match status" value="1"/>
</dbReference>
<feature type="chain" id="PRO_0000142430" description="Adenine deaminase">
    <location>
        <begin position="1"/>
        <end position="582"/>
    </location>
</feature>
<evidence type="ECO:0000255" key="1">
    <source>
        <dbReference type="HAMAP-Rule" id="MF_01518"/>
    </source>
</evidence>
<keyword id="KW-0378">Hydrolase</keyword>
<keyword id="KW-0464">Manganese</keyword>
<keyword id="KW-1185">Reference proteome</keyword>
<organism>
    <name type="scientific">Oceanobacillus iheyensis (strain DSM 14371 / CIP 107618 / JCM 11309 / KCTC 3954 / HTE831)</name>
    <dbReference type="NCBI Taxonomy" id="221109"/>
    <lineage>
        <taxon>Bacteria</taxon>
        <taxon>Bacillati</taxon>
        <taxon>Bacillota</taxon>
        <taxon>Bacilli</taxon>
        <taxon>Bacillales</taxon>
        <taxon>Bacillaceae</taxon>
        <taxon>Oceanobacillus</taxon>
    </lineage>
</organism>
<comment type="catalytic activity">
    <reaction evidence="1">
        <text>adenine + H2O + H(+) = hypoxanthine + NH4(+)</text>
        <dbReference type="Rhea" id="RHEA:23688"/>
        <dbReference type="ChEBI" id="CHEBI:15377"/>
        <dbReference type="ChEBI" id="CHEBI:15378"/>
        <dbReference type="ChEBI" id="CHEBI:16708"/>
        <dbReference type="ChEBI" id="CHEBI:17368"/>
        <dbReference type="ChEBI" id="CHEBI:28938"/>
        <dbReference type="EC" id="3.5.4.2"/>
    </reaction>
</comment>
<comment type="cofactor">
    <cofactor evidence="1">
        <name>Mn(2+)</name>
        <dbReference type="ChEBI" id="CHEBI:29035"/>
    </cofactor>
</comment>
<comment type="similarity">
    <text evidence="1">Belongs to the metallo-dependent hydrolases superfamily. Adenine deaminase family.</text>
</comment>
<protein>
    <recommendedName>
        <fullName evidence="1">Adenine deaminase</fullName>
        <shortName evidence="1">Adenase</shortName>
        <shortName evidence="1">Adenine aminase</shortName>
        <ecNumber evidence="1">3.5.4.2</ecNumber>
    </recommendedName>
</protein>